<accession>Q9WU79</accession>
<accession>A0JLW6</accession>
<accession>Q3UNR4</accession>
<accession>Q9QX61</accession>
<organism>
    <name type="scientific">Mus musculus</name>
    <name type="common">Mouse</name>
    <dbReference type="NCBI Taxonomy" id="10090"/>
    <lineage>
        <taxon>Eukaryota</taxon>
        <taxon>Metazoa</taxon>
        <taxon>Chordata</taxon>
        <taxon>Craniata</taxon>
        <taxon>Vertebrata</taxon>
        <taxon>Euteleostomi</taxon>
        <taxon>Mammalia</taxon>
        <taxon>Eutheria</taxon>
        <taxon>Euarchontoglires</taxon>
        <taxon>Glires</taxon>
        <taxon>Rodentia</taxon>
        <taxon>Myomorpha</taxon>
        <taxon>Muroidea</taxon>
        <taxon>Muridae</taxon>
        <taxon>Murinae</taxon>
        <taxon>Mus</taxon>
        <taxon>Mus</taxon>
    </lineage>
</organism>
<proteinExistence type="evidence at protein level"/>
<keyword id="KW-0007">Acetylation</keyword>
<keyword id="KW-0274">FAD</keyword>
<keyword id="KW-0285">Flavoprotein</keyword>
<keyword id="KW-0496">Mitochondrion</keyword>
<keyword id="KW-0560">Oxidoreductase</keyword>
<keyword id="KW-0642">Proline metabolism</keyword>
<keyword id="KW-1185">Reference proteome</keyword>
<keyword id="KW-0809">Transit peptide</keyword>
<sequence>MALKRVFLLRSVAPRVAALSTKPQAQEQPPASPEALRGCGAAKAVRPPVPAVDFTNTQEAYRSRRSWELVRNLLVLRLCASPVLLAHHEQLFQVARKLLGQRMFERLMKMTFYGHFVAGEDQESIRPLIRHNKAFGVGFILDYGVEEDLSPEEAERKEMESCTSEAERDGSGANKREKQYQVHPAFGDRRDGVISARTYFYANEAKCDNYMENLLQCIKASGGASDGGFSAIKLTALGRPQFLLQFSDVLTRWRRFFHQMAAEQGQAGRAAVDTKLEVAVLQDSIAKMGIASRAEIEGWFTPETLGVSGTVDLLDWNSLIDSRTRLSRHLVVPNVQTGQLEPLLSRFTEEEEQQMKRMLQRMDVLAKKAKEAGVRLMIDAEQSYFQPAISRLTLEMQRRFNVDKPFIFNTFQCYLKDAYDNVTLDMELARREGWCFGAKLVRGAYMAQERVRAAEIGYEDPINPTYEATNAMYHRCLNYVLEELKHSTKAEVMVASHNEDTVHFTLCRMKEIGLHPADGQVCFGQLLGMCDQISFPLGQAGFPVYKYVPYGPVMEVLPYLSRRALENSSIMKGAQRERQLLWQELRRRLRTGSLFHHPA</sequence>
<feature type="transit peptide" description="Mitochondrion" evidence="1">
    <location>
        <begin position="1"/>
        <end status="unknown"/>
    </location>
</feature>
<feature type="chain" id="PRO_0000025801" description="Proline dehydrogenase 1, mitochondrial">
    <location>
        <begin status="unknown"/>
        <end position="599"/>
    </location>
</feature>
<feature type="region of interest" description="Disordered" evidence="2">
    <location>
        <begin position="20"/>
        <end position="39"/>
    </location>
</feature>
<feature type="region of interest" description="Disordered" evidence="2">
    <location>
        <begin position="152"/>
        <end position="180"/>
    </location>
</feature>
<feature type="compositionally biased region" description="Low complexity" evidence="2">
    <location>
        <begin position="23"/>
        <end position="39"/>
    </location>
</feature>
<feature type="compositionally biased region" description="Basic and acidic residues" evidence="2">
    <location>
        <begin position="153"/>
        <end position="180"/>
    </location>
</feature>
<feature type="modified residue" description="N6-acetyllysine" evidence="4">
    <location>
        <position position="356"/>
    </location>
</feature>
<feature type="modified residue" description="N6-acetyllysine" evidence="4">
    <location>
        <position position="367"/>
    </location>
</feature>
<feature type="modified residue" description="N6-acetyllysine" evidence="4">
    <location>
        <position position="485"/>
    </location>
</feature>
<feature type="sequence conflict" description="In Ref. 5; AAF21467." evidence="3" ref="5">
    <original>FL</original>
    <variation>HE</variation>
    <location>
        <begin position="7"/>
        <end position="8"/>
    </location>
</feature>
<feature type="sequence conflict" description="In Ref. 1; BAE25683." evidence="3" ref="1">
    <original>E</original>
    <variation>V</variation>
    <location>
        <position position="303"/>
    </location>
</feature>
<feature type="sequence conflict" description="In Ref. 1; BAE25683." evidence="3" ref="1">
    <original>D</original>
    <variation>G</variation>
    <location>
        <position position="379"/>
    </location>
</feature>
<feature type="sequence conflict" description="In Ref. 4; AAD24776." evidence="3" ref="4">
    <original>F</original>
    <variation>S</variation>
    <location>
        <position position="436"/>
    </location>
</feature>
<feature type="sequence conflict" description="In Ref. 4; AAD24776." evidence="3" ref="4">
    <original>G</original>
    <variation>R</variation>
    <location>
        <position position="443"/>
    </location>
</feature>
<comment type="function">
    <text>Converts proline to delta-1-pyrroline-5-carboxylate.</text>
</comment>
<comment type="catalytic activity">
    <reaction>
        <text>L-proline + a quinone = (S)-1-pyrroline-5-carboxylate + a quinol + H(+)</text>
        <dbReference type="Rhea" id="RHEA:23784"/>
        <dbReference type="ChEBI" id="CHEBI:15378"/>
        <dbReference type="ChEBI" id="CHEBI:17388"/>
        <dbReference type="ChEBI" id="CHEBI:24646"/>
        <dbReference type="ChEBI" id="CHEBI:60039"/>
        <dbReference type="ChEBI" id="CHEBI:132124"/>
        <dbReference type="EC" id="1.5.5.2"/>
    </reaction>
</comment>
<comment type="cofactor">
    <cofactor>
        <name>FAD</name>
        <dbReference type="ChEBI" id="CHEBI:57692"/>
    </cofactor>
</comment>
<comment type="pathway">
    <text>Amino-acid degradation; L-proline degradation into L-glutamate; L-glutamate from L-proline: step 1/2.</text>
</comment>
<comment type="subcellular location">
    <subcellularLocation>
        <location>Mitochondrion matrix</location>
    </subcellularLocation>
</comment>
<comment type="tissue specificity">
    <text>Expressed in liver, kidney, heart and to a lesser extent in brain, lung and muscle.</text>
</comment>
<comment type="disease">
    <text>Pro/re mice that have a premature termination on Prodh are sluggish in their movement.</text>
</comment>
<comment type="similarity">
    <text evidence="3">Belongs to the proline oxidase family.</text>
</comment>
<comment type="sequence caution" evidence="3">
    <conflict type="erroneous initiation">
        <sequence resource="EMBL-CDS" id="AAD24776"/>
    </conflict>
    <text>Truncated N-terminus.</text>
</comment>
<comment type="sequence caution" evidence="3">
    <conflict type="erroneous initiation">
        <sequence resource="EMBL-CDS" id="AAI25328"/>
    </conflict>
    <text>Truncated N-terminus.</text>
</comment>
<comment type="sequence caution" evidence="3">
    <conflict type="erroneous gene model prediction">
        <sequence resource="EMBL-CDS" id="EDK97501"/>
    </conflict>
</comment>
<dbReference type="EC" id="1.5.5.2"/>
<dbReference type="EMBL" id="AK144068">
    <property type="protein sequence ID" value="BAE25683.1"/>
    <property type="molecule type" value="mRNA"/>
</dbReference>
<dbReference type="EMBL" id="AC087064">
    <property type="status" value="NOT_ANNOTATED_CDS"/>
    <property type="molecule type" value="Genomic_DNA"/>
</dbReference>
<dbReference type="EMBL" id="CH466521">
    <property type="protein sequence ID" value="EDK97501.1"/>
    <property type="status" value="ALT_SEQ"/>
    <property type="molecule type" value="Genomic_DNA"/>
</dbReference>
<dbReference type="EMBL" id="AF120279">
    <property type="protein sequence ID" value="AAD24776.1"/>
    <property type="status" value="ALT_INIT"/>
    <property type="molecule type" value="mRNA"/>
</dbReference>
<dbReference type="EMBL" id="U80020">
    <property type="protein sequence ID" value="AAF21467.1"/>
    <property type="molecule type" value="mRNA"/>
</dbReference>
<dbReference type="EMBL" id="BC125327">
    <property type="protein sequence ID" value="AAI25328.1"/>
    <property type="status" value="ALT_INIT"/>
    <property type="molecule type" value="mRNA"/>
</dbReference>
<dbReference type="CCDS" id="CCDS37278.1"/>
<dbReference type="RefSeq" id="NP_035302.2">
    <property type="nucleotide sequence ID" value="NM_011172.3"/>
</dbReference>
<dbReference type="SMR" id="Q9WU79"/>
<dbReference type="BioGRID" id="202392">
    <property type="interactions" value="1"/>
</dbReference>
<dbReference type="FunCoup" id="Q9WU79">
    <property type="interactions" value="1572"/>
</dbReference>
<dbReference type="STRING" id="10090.ENSMUSP00000003620"/>
<dbReference type="GlyGen" id="Q9WU79">
    <property type="glycosylation" value="1 site, 1 O-linked glycan (1 site)"/>
</dbReference>
<dbReference type="iPTMnet" id="Q9WU79"/>
<dbReference type="PhosphoSitePlus" id="Q9WU79"/>
<dbReference type="SwissPalm" id="Q9WU79"/>
<dbReference type="jPOST" id="Q9WU79"/>
<dbReference type="PaxDb" id="10090-ENSMUSP00000003620"/>
<dbReference type="PeptideAtlas" id="Q9WU79"/>
<dbReference type="ProteomicsDB" id="289843"/>
<dbReference type="DNASU" id="19125"/>
<dbReference type="Ensembl" id="ENSMUST00000003620.13">
    <property type="protein sequence ID" value="ENSMUSP00000003620.6"/>
    <property type="gene ID" value="ENSMUSG00000003526.13"/>
</dbReference>
<dbReference type="GeneID" id="19125"/>
<dbReference type="KEGG" id="mmu:19125"/>
<dbReference type="UCSC" id="uc007ymu.1">
    <property type="organism name" value="mouse"/>
</dbReference>
<dbReference type="AGR" id="MGI:97770"/>
<dbReference type="CTD" id="5625"/>
<dbReference type="MGI" id="MGI:97770">
    <property type="gene designation" value="Prodh"/>
</dbReference>
<dbReference type="VEuPathDB" id="HostDB:ENSMUSG00000003526"/>
<dbReference type="eggNOG" id="KOG0186">
    <property type="taxonomic scope" value="Eukaryota"/>
</dbReference>
<dbReference type="GeneTree" id="ENSGT00390000006265"/>
<dbReference type="InParanoid" id="Q9WU79"/>
<dbReference type="OMA" id="GPLKKYH"/>
<dbReference type="OrthoDB" id="5464at2759"/>
<dbReference type="PhylomeDB" id="Q9WU79"/>
<dbReference type="TreeFam" id="TF313544"/>
<dbReference type="BRENDA" id="1.5.5.2">
    <property type="organism ID" value="3474"/>
</dbReference>
<dbReference type="Reactome" id="R-MMU-70688">
    <property type="pathway name" value="Proline catabolism"/>
</dbReference>
<dbReference type="UniPathway" id="UPA00261">
    <property type="reaction ID" value="UER00373"/>
</dbReference>
<dbReference type="BioGRID-ORCS" id="19125">
    <property type="hits" value="4 hits in 77 CRISPR screens"/>
</dbReference>
<dbReference type="ChiTaRS" id="Prodh">
    <property type="organism name" value="mouse"/>
</dbReference>
<dbReference type="PRO" id="PR:Q9WU79"/>
<dbReference type="Proteomes" id="UP000000589">
    <property type="component" value="Chromosome 16"/>
</dbReference>
<dbReference type="RNAct" id="Q9WU79">
    <property type="molecule type" value="protein"/>
</dbReference>
<dbReference type="Bgee" id="ENSMUSG00000003526">
    <property type="expression patterns" value="Expressed in adult mammalian kidney and 75 other cell types or tissues"/>
</dbReference>
<dbReference type="ExpressionAtlas" id="Q9WU79">
    <property type="expression patterns" value="baseline and differential"/>
</dbReference>
<dbReference type="GO" id="GO:0005743">
    <property type="term" value="C:mitochondrial inner membrane"/>
    <property type="evidence" value="ECO:0007005"/>
    <property type="project" value="MGI"/>
</dbReference>
<dbReference type="GO" id="GO:0005759">
    <property type="term" value="C:mitochondrial matrix"/>
    <property type="evidence" value="ECO:0007669"/>
    <property type="project" value="UniProtKB-SubCell"/>
</dbReference>
<dbReference type="GO" id="GO:0005739">
    <property type="term" value="C:mitochondrion"/>
    <property type="evidence" value="ECO:0000314"/>
    <property type="project" value="MGI"/>
</dbReference>
<dbReference type="GO" id="GO:0016597">
    <property type="term" value="F:amino acid binding"/>
    <property type="evidence" value="ECO:0007669"/>
    <property type="project" value="Ensembl"/>
</dbReference>
<dbReference type="GO" id="GO:0071949">
    <property type="term" value="F:FAD binding"/>
    <property type="evidence" value="ECO:0000250"/>
    <property type="project" value="UniProtKB"/>
</dbReference>
<dbReference type="GO" id="GO:0004657">
    <property type="term" value="F:proline dehydrogenase activity"/>
    <property type="evidence" value="ECO:0000250"/>
    <property type="project" value="UniProtKB"/>
</dbReference>
<dbReference type="GO" id="GO:0010133">
    <property type="term" value="P:proline catabolic process to glutamate"/>
    <property type="evidence" value="ECO:0007669"/>
    <property type="project" value="UniProtKB-UniPathway"/>
</dbReference>
<dbReference type="FunFam" id="3.20.20.220:FF:000006">
    <property type="entry name" value="Proline dehydrogenase"/>
    <property type="match status" value="1"/>
</dbReference>
<dbReference type="Gene3D" id="3.20.20.220">
    <property type="match status" value="2"/>
</dbReference>
<dbReference type="InterPro" id="IPR029041">
    <property type="entry name" value="FAD-linked_oxidoreductase-like"/>
</dbReference>
<dbReference type="InterPro" id="IPR002872">
    <property type="entry name" value="Proline_DH_dom"/>
</dbReference>
<dbReference type="InterPro" id="IPR015659">
    <property type="entry name" value="Proline_oxidase"/>
</dbReference>
<dbReference type="PANTHER" id="PTHR13914:SF0">
    <property type="entry name" value="PROLINE DEHYDROGENASE 1, MITOCHONDRIAL"/>
    <property type="match status" value="1"/>
</dbReference>
<dbReference type="PANTHER" id="PTHR13914">
    <property type="entry name" value="PROLINE OXIDASE"/>
    <property type="match status" value="1"/>
</dbReference>
<dbReference type="Pfam" id="PF01619">
    <property type="entry name" value="Pro_dh"/>
    <property type="match status" value="1"/>
</dbReference>
<dbReference type="SUPFAM" id="SSF51730">
    <property type="entry name" value="FAD-linked oxidoreductase"/>
    <property type="match status" value="1"/>
</dbReference>
<gene>
    <name type="primary">Prodh</name>
    <name type="synonym">Pro1</name>
</gene>
<reference key="1">
    <citation type="journal article" date="2005" name="Science">
        <title>The transcriptional landscape of the mammalian genome.</title>
        <authorList>
            <person name="Carninci P."/>
            <person name="Kasukawa T."/>
            <person name="Katayama S."/>
            <person name="Gough J."/>
            <person name="Frith M.C."/>
            <person name="Maeda N."/>
            <person name="Oyama R."/>
            <person name="Ravasi T."/>
            <person name="Lenhard B."/>
            <person name="Wells C."/>
            <person name="Kodzius R."/>
            <person name="Shimokawa K."/>
            <person name="Bajic V.B."/>
            <person name="Brenner S.E."/>
            <person name="Batalov S."/>
            <person name="Forrest A.R."/>
            <person name="Zavolan M."/>
            <person name="Davis M.J."/>
            <person name="Wilming L.G."/>
            <person name="Aidinis V."/>
            <person name="Allen J.E."/>
            <person name="Ambesi-Impiombato A."/>
            <person name="Apweiler R."/>
            <person name="Aturaliya R.N."/>
            <person name="Bailey T.L."/>
            <person name="Bansal M."/>
            <person name="Baxter L."/>
            <person name="Beisel K.W."/>
            <person name="Bersano T."/>
            <person name="Bono H."/>
            <person name="Chalk A.M."/>
            <person name="Chiu K.P."/>
            <person name="Choudhary V."/>
            <person name="Christoffels A."/>
            <person name="Clutterbuck D.R."/>
            <person name="Crowe M.L."/>
            <person name="Dalla E."/>
            <person name="Dalrymple B.P."/>
            <person name="de Bono B."/>
            <person name="Della Gatta G."/>
            <person name="di Bernardo D."/>
            <person name="Down T."/>
            <person name="Engstrom P."/>
            <person name="Fagiolini M."/>
            <person name="Faulkner G."/>
            <person name="Fletcher C.F."/>
            <person name="Fukushima T."/>
            <person name="Furuno M."/>
            <person name="Futaki S."/>
            <person name="Gariboldi M."/>
            <person name="Georgii-Hemming P."/>
            <person name="Gingeras T.R."/>
            <person name="Gojobori T."/>
            <person name="Green R.E."/>
            <person name="Gustincich S."/>
            <person name="Harbers M."/>
            <person name="Hayashi Y."/>
            <person name="Hensch T.K."/>
            <person name="Hirokawa N."/>
            <person name="Hill D."/>
            <person name="Huminiecki L."/>
            <person name="Iacono M."/>
            <person name="Ikeo K."/>
            <person name="Iwama A."/>
            <person name="Ishikawa T."/>
            <person name="Jakt M."/>
            <person name="Kanapin A."/>
            <person name="Katoh M."/>
            <person name="Kawasawa Y."/>
            <person name="Kelso J."/>
            <person name="Kitamura H."/>
            <person name="Kitano H."/>
            <person name="Kollias G."/>
            <person name="Krishnan S.P."/>
            <person name="Kruger A."/>
            <person name="Kummerfeld S.K."/>
            <person name="Kurochkin I.V."/>
            <person name="Lareau L.F."/>
            <person name="Lazarevic D."/>
            <person name="Lipovich L."/>
            <person name="Liu J."/>
            <person name="Liuni S."/>
            <person name="McWilliam S."/>
            <person name="Madan Babu M."/>
            <person name="Madera M."/>
            <person name="Marchionni L."/>
            <person name="Matsuda H."/>
            <person name="Matsuzawa S."/>
            <person name="Miki H."/>
            <person name="Mignone F."/>
            <person name="Miyake S."/>
            <person name="Morris K."/>
            <person name="Mottagui-Tabar S."/>
            <person name="Mulder N."/>
            <person name="Nakano N."/>
            <person name="Nakauchi H."/>
            <person name="Ng P."/>
            <person name="Nilsson R."/>
            <person name="Nishiguchi S."/>
            <person name="Nishikawa S."/>
            <person name="Nori F."/>
            <person name="Ohara O."/>
            <person name="Okazaki Y."/>
            <person name="Orlando V."/>
            <person name="Pang K.C."/>
            <person name="Pavan W.J."/>
            <person name="Pavesi G."/>
            <person name="Pesole G."/>
            <person name="Petrovsky N."/>
            <person name="Piazza S."/>
            <person name="Reed J."/>
            <person name="Reid J.F."/>
            <person name="Ring B.Z."/>
            <person name="Ringwald M."/>
            <person name="Rost B."/>
            <person name="Ruan Y."/>
            <person name="Salzberg S.L."/>
            <person name="Sandelin A."/>
            <person name="Schneider C."/>
            <person name="Schoenbach C."/>
            <person name="Sekiguchi K."/>
            <person name="Semple C.A."/>
            <person name="Seno S."/>
            <person name="Sessa L."/>
            <person name="Sheng Y."/>
            <person name="Shibata Y."/>
            <person name="Shimada H."/>
            <person name="Shimada K."/>
            <person name="Silva D."/>
            <person name="Sinclair B."/>
            <person name="Sperling S."/>
            <person name="Stupka E."/>
            <person name="Sugiura K."/>
            <person name="Sultana R."/>
            <person name="Takenaka Y."/>
            <person name="Taki K."/>
            <person name="Tammoja K."/>
            <person name="Tan S.L."/>
            <person name="Tang S."/>
            <person name="Taylor M.S."/>
            <person name="Tegner J."/>
            <person name="Teichmann S.A."/>
            <person name="Ueda H.R."/>
            <person name="van Nimwegen E."/>
            <person name="Verardo R."/>
            <person name="Wei C.L."/>
            <person name="Yagi K."/>
            <person name="Yamanishi H."/>
            <person name="Zabarovsky E."/>
            <person name="Zhu S."/>
            <person name="Zimmer A."/>
            <person name="Hide W."/>
            <person name="Bult C."/>
            <person name="Grimmond S.M."/>
            <person name="Teasdale R.D."/>
            <person name="Liu E.T."/>
            <person name="Brusic V."/>
            <person name="Quackenbush J."/>
            <person name="Wahlestedt C."/>
            <person name="Mattick J.S."/>
            <person name="Hume D.A."/>
            <person name="Kai C."/>
            <person name="Sasaki D."/>
            <person name="Tomaru Y."/>
            <person name="Fukuda S."/>
            <person name="Kanamori-Katayama M."/>
            <person name="Suzuki M."/>
            <person name="Aoki J."/>
            <person name="Arakawa T."/>
            <person name="Iida J."/>
            <person name="Imamura K."/>
            <person name="Itoh M."/>
            <person name="Kato T."/>
            <person name="Kawaji H."/>
            <person name="Kawagashira N."/>
            <person name="Kawashima T."/>
            <person name="Kojima M."/>
            <person name="Kondo S."/>
            <person name="Konno H."/>
            <person name="Nakano K."/>
            <person name="Ninomiya N."/>
            <person name="Nishio T."/>
            <person name="Okada M."/>
            <person name="Plessy C."/>
            <person name="Shibata K."/>
            <person name="Shiraki T."/>
            <person name="Suzuki S."/>
            <person name="Tagami M."/>
            <person name="Waki K."/>
            <person name="Watahiki A."/>
            <person name="Okamura-Oho Y."/>
            <person name="Suzuki H."/>
            <person name="Kawai J."/>
            <person name="Hayashizaki Y."/>
        </authorList>
    </citation>
    <scope>NUCLEOTIDE SEQUENCE [LARGE SCALE MRNA]</scope>
    <source>
        <strain>C57BL/6J</strain>
        <tissue>Kidney</tissue>
    </source>
</reference>
<reference key="2">
    <citation type="journal article" date="2009" name="PLoS Biol.">
        <title>Lineage-specific biology revealed by a finished genome assembly of the mouse.</title>
        <authorList>
            <person name="Church D.M."/>
            <person name="Goodstadt L."/>
            <person name="Hillier L.W."/>
            <person name="Zody M.C."/>
            <person name="Goldstein S."/>
            <person name="She X."/>
            <person name="Bult C.J."/>
            <person name="Agarwala R."/>
            <person name="Cherry J.L."/>
            <person name="DiCuccio M."/>
            <person name="Hlavina W."/>
            <person name="Kapustin Y."/>
            <person name="Meric P."/>
            <person name="Maglott D."/>
            <person name="Birtle Z."/>
            <person name="Marques A.C."/>
            <person name="Graves T."/>
            <person name="Zhou S."/>
            <person name="Teague B."/>
            <person name="Potamousis K."/>
            <person name="Churas C."/>
            <person name="Place M."/>
            <person name="Herschleb J."/>
            <person name="Runnheim R."/>
            <person name="Forrest D."/>
            <person name="Amos-Landgraf J."/>
            <person name="Schwartz D.C."/>
            <person name="Cheng Z."/>
            <person name="Lindblad-Toh K."/>
            <person name="Eichler E.E."/>
            <person name="Ponting C.P."/>
        </authorList>
    </citation>
    <scope>NUCLEOTIDE SEQUENCE [LARGE SCALE GENOMIC DNA]</scope>
    <source>
        <strain>C57BL/6J</strain>
    </source>
</reference>
<reference key="3">
    <citation type="submission" date="2005-07" db="EMBL/GenBank/DDBJ databases">
        <authorList>
            <person name="Mural R.J."/>
            <person name="Adams M.D."/>
            <person name="Myers E.W."/>
            <person name="Smith H.O."/>
            <person name="Venter J.C."/>
        </authorList>
    </citation>
    <scope>NUCLEOTIDE SEQUENCE [LARGE SCALE GENOMIC DNA]</scope>
</reference>
<reference key="4">
    <citation type="journal article" date="1999" name="Nat. Genet.">
        <title>The gene encoding proline dehydrogenase modulates sensorimotor gating in mice.</title>
        <authorList>
            <person name="Gogos J.A."/>
            <person name="Santha M."/>
            <person name="Takacs Z."/>
            <person name="Beck K.D."/>
            <person name="Luine V."/>
            <person name="Lucas L.R."/>
            <person name="Nadler J.V."/>
            <person name="Karayiorgou M."/>
        </authorList>
    </citation>
    <scope>NUCLEOTIDE SEQUENCE [MRNA] OF 5-599</scope>
    <source>
        <strain>C57BL/6J</strain>
        <strain>PRO/Re</strain>
        <tissue>Cerebellum</tissue>
    </source>
</reference>
<reference key="5">
    <citation type="submission" date="1996-11" db="EMBL/GenBank/DDBJ databases">
        <authorList>
            <person name="Lin W.-W."/>
            <person name="Hu C.A."/>
            <person name="Valle D."/>
        </authorList>
    </citation>
    <scope>NUCLEOTIDE SEQUENCE [MRNA] OF 7-599</scope>
</reference>
<reference key="6">
    <citation type="journal article" date="2004" name="Genome Res.">
        <title>The status, quality, and expansion of the NIH full-length cDNA project: the Mammalian Gene Collection (MGC).</title>
        <authorList>
            <consortium name="The MGC Project Team"/>
        </authorList>
    </citation>
    <scope>NUCLEOTIDE SEQUENCE [LARGE SCALE MRNA] OF 56-599</scope>
    <source>
        <tissue>Brain</tissue>
    </source>
</reference>
<reference key="7">
    <citation type="journal article" date="2010" name="Cell">
        <title>A tissue-specific atlas of mouse protein phosphorylation and expression.</title>
        <authorList>
            <person name="Huttlin E.L."/>
            <person name="Jedrychowski M.P."/>
            <person name="Elias J.E."/>
            <person name="Goswami T."/>
            <person name="Rad R."/>
            <person name="Beausoleil S.A."/>
            <person name="Villen J."/>
            <person name="Haas W."/>
            <person name="Sowa M.E."/>
            <person name="Gygi S.P."/>
        </authorList>
    </citation>
    <scope>IDENTIFICATION BY MASS SPECTROMETRY [LARGE SCALE ANALYSIS]</scope>
    <source>
        <tissue>Brain</tissue>
        <tissue>Brown adipose tissue</tissue>
        <tissue>Heart</tissue>
        <tissue>Kidney</tissue>
        <tissue>Liver</tissue>
        <tissue>Lung</tissue>
    </source>
</reference>
<reference key="8">
    <citation type="journal article" date="2013" name="Proc. Natl. Acad. Sci. U.S.A.">
        <title>Label-free quantitative proteomics of the lysine acetylome in mitochondria identifies substrates of SIRT3 in metabolic pathways.</title>
        <authorList>
            <person name="Rardin M.J."/>
            <person name="Newman J.C."/>
            <person name="Held J.M."/>
            <person name="Cusack M.P."/>
            <person name="Sorensen D.J."/>
            <person name="Li B."/>
            <person name="Schilling B."/>
            <person name="Mooney S.D."/>
            <person name="Kahn C.R."/>
            <person name="Verdin E."/>
            <person name="Gibson B.W."/>
        </authorList>
    </citation>
    <scope>ACETYLATION [LARGE SCALE ANALYSIS] AT LYS-356; LYS-367 AND LYS-485</scope>
    <scope>IDENTIFICATION BY MASS SPECTROMETRY [LARGE SCALE ANALYSIS]</scope>
    <source>
        <tissue>Liver</tissue>
    </source>
</reference>
<name>PROD_MOUSE</name>
<evidence type="ECO:0000255" key="1"/>
<evidence type="ECO:0000256" key="2">
    <source>
        <dbReference type="SAM" id="MobiDB-lite"/>
    </source>
</evidence>
<evidence type="ECO:0000305" key="3"/>
<evidence type="ECO:0007744" key="4">
    <source>
    </source>
</evidence>
<protein>
    <recommendedName>
        <fullName>Proline dehydrogenase 1, mitochondrial</fullName>
        <ecNumber>1.5.5.2</ecNumber>
    </recommendedName>
    <alternativeName>
        <fullName>Proline oxidase</fullName>
    </alternativeName>
</protein>